<name>TXVE_VIPAP</name>
<feature type="chain" id="PRO_0000162364" description="Snake venom vascular endothelial growth factor toxin HF">
    <location>
        <begin position="1"/>
        <end position="110"/>
    </location>
</feature>
<feature type="modified residue" description="Pyrrolidone carboxylic acid" evidence="3">
    <location>
        <position position="1"/>
    </location>
</feature>
<feature type="disulfide bond" evidence="2">
    <location>
        <begin position="14"/>
        <end position="56"/>
    </location>
</feature>
<feature type="disulfide bond" description="Interchain (with C-48)" evidence="2">
    <location>
        <position position="39"/>
    </location>
</feature>
<feature type="disulfide bond" evidence="2">
    <location>
        <begin position="45"/>
        <end position="91"/>
    </location>
</feature>
<feature type="disulfide bond" description="Interchain (with C-39)" evidence="2">
    <location>
        <position position="48"/>
    </location>
</feature>
<feature type="disulfide bond" evidence="2">
    <location>
        <begin position="49"/>
        <end position="93"/>
    </location>
</feature>
<feature type="sequence variant" evidence="3">
    <original>H</original>
    <variation>W</variation>
    <location>
        <position position="62"/>
    </location>
</feature>
<organism>
    <name type="scientific">Vipera aspis aspis</name>
    <name type="common">Aspic viper</name>
    <dbReference type="NCBI Taxonomy" id="194601"/>
    <lineage>
        <taxon>Eukaryota</taxon>
        <taxon>Metazoa</taxon>
        <taxon>Chordata</taxon>
        <taxon>Craniata</taxon>
        <taxon>Vertebrata</taxon>
        <taxon>Euteleostomi</taxon>
        <taxon>Lepidosauria</taxon>
        <taxon>Squamata</taxon>
        <taxon>Bifurcata</taxon>
        <taxon>Unidentata</taxon>
        <taxon>Episquamata</taxon>
        <taxon>Toxicofera</taxon>
        <taxon>Serpentes</taxon>
        <taxon>Colubroidea</taxon>
        <taxon>Viperidae</taxon>
        <taxon>Viperinae</taxon>
        <taxon>Vipera</taxon>
    </lineage>
</organism>
<proteinExistence type="evidence at protein level"/>
<dbReference type="SMR" id="P83942"/>
<dbReference type="GO" id="GO:0005615">
    <property type="term" value="C:extracellular space"/>
    <property type="evidence" value="ECO:0007669"/>
    <property type="project" value="TreeGrafter"/>
</dbReference>
<dbReference type="GO" id="GO:0016020">
    <property type="term" value="C:membrane"/>
    <property type="evidence" value="ECO:0007669"/>
    <property type="project" value="InterPro"/>
</dbReference>
<dbReference type="GO" id="GO:0042056">
    <property type="term" value="F:chemoattractant activity"/>
    <property type="evidence" value="ECO:0007669"/>
    <property type="project" value="TreeGrafter"/>
</dbReference>
<dbReference type="GO" id="GO:0008083">
    <property type="term" value="F:growth factor activity"/>
    <property type="evidence" value="ECO:0007669"/>
    <property type="project" value="UniProtKB-KW"/>
</dbReference>
<dbReference type="GO" id="GO:0090729">
    <property type="term" value="F:toxin activity"/>
    <property type="evidence" value="ECO:0007669"/>
    <property type="project" value="UniProtKB-KW"/>
</dbReference>
<dbReference type="GO" id="GO:0005172">
    <property type="term" value="F:vascular endothelial growth factor receptor binding"/>
    <property type="evidence" value="ECO:0007669"/>
    <property type="project" value="TreeGrafter"/>
</dbReference>
<dbReference type="GO" id="GO:0050930">
    <property type="term" value="P:induction of positive chemotaxis"/>
    <property type="evidence" value="ECO:0007669"/>
    <property type="project" value="TreeGrafter"/>
</dbReference>
<dbReference type="GO" id="GO:0045766">
    <property type="term" value="P:positive regulation of angiogenesis"/>
    <property type="evidence" value="ECO:0007669"/>
    <property type="project" value="TreeGrafter"/>
</dbReference>
<dbReference type="GO" id="GO:0001938">
    <property type="term" value="P:positive regulation of endothelial cell proliferation"/>
    <property type="evidence" value="ECO:0007669"/>
    <property type="project" value="TreeGrafter"/>
</dbReference>
<dbReference type="GO" id="GO:0060754">
    <property type="term" value="P:positive regulation of mast cell chemotaxis"/>
    <property type="evidence" value="ECO:0007669"/>
    <property type="project" value="TreeGrafter"/>
</dbReference>
<dbReference type="GO" id="GO:0001666">
    <property type="term" value="P:response to hypoxia"/>
    <property type="evidence" value="ECO:0007669"/>
    <property type="project" value="TreeGrafter"/>
</dbReference>
<dbReference type="GO" id="GO:0002040">
    <property type="term" value="P:sprouting angiogenesis"/>
    <property type="evidence" value="ECO:0007669"/>
    <property type="project" value="TreeGrafter"/>
</dbReference>
<dbReference type="GO" id="GO:0048010">
    <property type="term" value="P:vascular endothelial growth factor receptor signaling pathway"/>
    <property type="evidence" value="ECO:0007669"/>
    <property type="project" value="TreeGrafter"/>
</dbReference>
<dbReference type="GO" id="GO:0038084">
    <property type="term" value="P:vascular endothelial growth factor signaling pathway"/>
    <property type="evidence" value="ECO:0007669"/>
    <property type="project" value="TreeGrafter"/>
</dbReference>
<dbReference type="CDD" id="cd00135">
    <property type="entry name" value="PDGF"/>
    <property type="match status" value="1"/>
</dbReference>
<dbReference type="Gene3D" id="2.10.90.10">
    <property type="entry name" value="Cystine-knot cytokines"/>
    <property type="match status" value="1"/>
</dbReference>
<dbReference type="InterPro" id="IPR029034">
    <property type="entry name" value="Cystine-knot_cytokine"/>
</dbReference>
<dbReference type="InterPro" id="IPR023581">
    <property type="entry name" value="PD_growth_factor_CS"/>
</dbReference>
<dbReference type="InterPro" id="IPR000072">
    <property type="entry name" value="PDGF/VEGF_dom"/>
</dbReference>
<dbReference type="InterPro" id="IPR050507">
    <property type="entry name" value="PDGF/VEGF_growth_factor"/>
</dbReference>
<dbReference type="PANTHER" id="PTHR12025">
    <property type="entry name" value="VASCULAR ENDOTHELIAL GROWTH FACTOR"/>
    <property type="match status" value="1"/>
</dbReference>
<dbReference type="PANTHER" id="PTHR12025:SF5">
    <property type="entry name" value="VASCULAR ENDOTHELIAL GROWTH FACTOR A, LONG FORM"/>
    <property type="match status" value="1"/>
</dbReference>
<dbReference type="Pfam" id="PF00341">
    <property type="entry name" value="PDGF"/>
    <property type="match status" value="1"/>
</dbReference>
<dbReference type="SMART" id="SM00141">
    <property type="entry name" value="PDGF"/>
    <property type="match status" value="1"/>
</dbReference>
<dbReference type="SUPFAM" id="SSF57501">
    <property type="entry name" value="Cystine-knot cytokines"/>
    <property type="match status" value="1"/>
</dbReference>
<dbReference type="PROSITE" id="PS00249">
    <property type="entry name" value="PDGF_1"/>
    <property type="match status" value="1"/>
</dbReference>
<dbReference type="PROSITE" id="PS50278">
    <property type="entry name" value="PDGF_2"/>
    <property type="match status" value="1"/>
</dbReference>
<reference key="1">
    <citation type="journal article" date="1999" name="Biochemistry">
        <title>Vascular endothelial growth factor VEGF-like heparin-binding protein from the venom of Vipera aspis aspis (Aspic viper).</title>
        <authorList>
            <person name="Komori Y."/>
            <person name="Nikai T."/>
            <person name="Taniguchi K."/>
            <person name="Masuda K."/>
            <person name="Sugihara H."/>
        </authorList>
    </citation>
    <scope>PROTEIN SEQUENCE</scope>
    <scope>FUNCTION</scope>
    <scope>SUBUNIT</scope>
    <scope>SUBCELLULAR LOCATION</scope>
    <scope>TISSUE SPECIFICITY</scope>
    <scope>MASS SPECTROMETRY</scope>
    <scope>PYROGLUTAMATE FORMATION AT GLN-1</scope>
    <scope>VARIANT TRP-62</scope>
    <source>
        <tissue>Venom</tissue>
    </source>
</reference>
<reference key="2">
    <citation type="journal article" date="2003" name="J. Biol. Chem.">
        <title>Snake venom vascular endothelial growth factors (VEGFs) exhibit potent activity through their specific recognition of KDR (VEGF receptor 2).</title>
        <authorList>
            <person name="Yamazaki Y."/>
            <person name="Takani K."/>
            <person name="Atoda H."/>
            <person name="Morita T."/>
        </authorList>
    </citation>
    <scope>FUNCTION</scope>
    <scope>INTERACTION WITH KDR</scope>
    <scope>SUBCELLULAR LOCATION</scope>
    <source>
        <tissue>Venom</tissue>
    </source>
</reference>
<accession>P83942</accession>
<keyword id="KW-0903">Direct protein sequencing</keyword>
<keyword id="KW-1015">Disulfide bond</keyword>
<keyword id="KW-0339">Growth factor</keyword>
<keyword id="KW-0873">Pyrrolidone carboxylic acid</keyword>
<keyword id="KW-0964">Secreted</keyword>
<keyword id="KW-0800">Toxin</keyword>
<protein>
    <recommendedName>
        <fullName evidence="6">Snake venom vascular endothelial growth factor toxin HF</fullName>
        <shortName>svVEGF</shortName>
    </recommendedName>
    <alternativeName>
        <fullName>Heparin-binding dimeric hypotensive factor</fullName>
    </alternativeName>
    <alternativeName>
        <fullName evidence="5">Hypotensive factor</fullName>
        <shortName evidence="5">HF</shortName>
    </alternativeName>
    <alternativeName>
        <fullName evidence="1">VEGF-F</fullName>
    </alternativeName>
</protein>
<comment type="function">
    <text evidence="3 4">Snake venom VEGFs that may contribute to venom dispersion and prey subjugation by inducing vascular permeability and hypotension. This protein induces an increase in capillary permeability after intradermal injection, as well as a drastic hypotensive effect after intravenous injection (PubMed:10512636). The hypotension is mediated by nitric oxide (NO), which is produced by VEGF-activated endothelium NO synthase (PubMed:14600159). Also induces angiogenesis in vitro, probably through VEGF receptor (KDR/VEGFR-2) signaling (PubMed:14600159).</text>
</comment>
<comment type="subunit">
    <text evidence="3 4">Homodimer; disulfide-linked (PubMed:10512636). Interacts with VEGF receptor-2 (KDR) with high affinity (PubMed:14600159).</text>
</comment>
<comment type="subcellular location">
    <subcellularLocation>
        <location evidence="3 4">Secreted</location>
    </subcellularLocation>
</comment>
<comment type="tissue specificity">
    <text evidence="3">Expressed by the venom gland.</text>
</comment>
<comment type="mass spectrometry" mass="25071.1" method="Electrospray" evidence="3"/>
<comment type="miscellaneous">
    <text evidence="4">Negative results: does not interact with VEGF receptor-1 (Flt-1), VEGF receptor-3 (FLT4), and neuropilin-1 (NRP1).</text>
</comment>
<comment type="similarity">
    <text evidence="7">Belongs to the PDGF/VEGF growth factor family. Snake venom VEGF subfamily.</text>
</comment>
<sequence length="110" mass="12561">QVRPFLEVHERSACQARETLVSILQEYPDEISDIFRPSCVAVLRCSGCCTDESLKCTPVGKHTVDLQIMRVNPRTQSSKMEVMKFTEHTACECRPRRKQGEPDGPKEKPR</sequence>
<evidence type="ECO:0000250" key="1">
    <source>
        <dbReference type="UniProtKB" id="P0DL42"/>
    </source>
</evidence>
<evidence type="ECO:0000250" key="2">
    <source>
        <dbReference type="UniProtKB" id="P67863"/>
    </source>
</evidence>
<evidence type="ECO:0000269" key="3">
    <source>
    </source>
</evidence>
<evidence type="ECO:0000269" key="4">
    <source>
    </source>
</evidence>
<evidence type="ECO:0000303" key="5">
    <source>
    </source>
</evidence>
<evidence type="ECO:0000303" key="6">
    <source>
    </source>
</evidence>
<evidence type="ECO:0000305" key="7"/>